<organism>
    <name type="scientific">Emericella nidulans (strain FGSC A4 / ATCC 38163 / CBS 112.46 / NRRL 194 / M139)</name>
    <name type="common">Aspergillus nidulans</name>
    <dbReference type="NCBI Taxonomy" id="227321"/>
    <lineage>
        <taxon>Eukaryota</taxon>
        <taxon>Fungi</taxon>
        <taxon>Dikarya</taxon>
        <taxon>Ascomycota</taxon>
        <taxon>Pezizomycotina</taxon>
        <taxon>Eurotiomycetes</taxon>
        <taxon>Eurotiomycetidae</taxon>
        <taxon>Eurotiales</taxon>
        <taxon>Aspergillaceae</taxon>
        <taxon>Aspergillus</taxon>
        <taxon>Aspergillus subgen. Nidulantes</taxon>
    </lineage>
</organism>
<keyword id="KW-0256">Endoplasmic reticulum</keyword>
<keyword id="KW-0378">Hydrolase</keyword>
<keyword id="KW-0472">Membrane</keyword>
<keyword id="KW-0645">Protease</keyword>
<keyword id="KW-1185">Reference proteome</keyword>
<keyword id="KW-0735">Signal-anchor</keyword>
<keyword id="KW-0812">Transmembrane</keyword>
<keyword id="KW-1133">Transmembrane helix</keyword>
<feature type="chain" id="PRO_0000412329" description="Signal peptidase complex catalytic subunit sec11">
    <location>
        <begin position="1"/>
        <end position="192"/>
    </location>
</feature>
<feature type="topological domain" description="Cytoplasmic" evidence="3">
    <location>
        <begin position="1"/>
        <end position="18"/>
    </location>
</feature>
<feature type="transmembrane region" description="Helical; Signal-anchor for type II membrane protein" evidence="3">
    <location>
        <begin position="19"/>
        <end position="39"/>
    </location>
</feature>
<feature type="topological domain" description="Lumenal" evidence="3">
    <location>
        <begin position="40"/>
        <end position="192"/>
    </location>
</feature>
<feature type="region of interest" description="C-terminal short (CTS) helix" evidence="2">
    <location>
        <begin position="178"/>
        <end position="189"/>
    </location>
</feature>
<feature type="active site" description="Charge relay system" evidence="1">
    <location>
        <position position="53"/>
    </location>
</feature>
<feature type="active site" description="Charge relay system" evidence="1">
    <location>
        <position position="92"/>
    </location>
</feature>
<feature type="active site" description="Charge relay system" evidence="1">
    <location>
        <position position="134"/>
    </location>
</feature>
<evidence type="ECO:0000250" key="1">
    <source>
        <dbReference type="UniProtKB" id="P15367"/>
    </source>
</evidence>
<evidence type="ECO:0000250" key="2">
    <source>
        <dbReference type="UniProtKB" id="P67812"/>
    </source>
</evidence>
<evidence type="ECO:0000255" key="3"/>
<evidence type="ECO:0000305" key="4"/>
<dbReference type="EC" id="3.4.21.89" evidence="1"/>
<dbReference type="EMBL" id="AACD01000051">
    <property type="protein sequence ID" value="EAA63697.1"/>
    <property type="status" value="ALT_SEQ"/>
    <property type="molecule type" value="Genomic_DNA"/>
</dbReference>
<dbReference type="EMBL" id="BN001306">
    <property type="protein sequence ID" value="CBF83359.1"/>
    <property type="molecule type" value="Genomic_DNA"/>
</dbReference>
<dbReference type="RefSeq" id="XP_660730.1">
    <property type="nucleotide sequence ID" value="XM_655638.1"/>
</dbReference>
<dbReference type="SMR" id="Q5B8K4"/>
<dbReference type="FunCoup" id="Q5B8K4">
    <property type="interactions" value="654"/>
</dbReference>
<dbReference type="STRING" id="227321.Q5B8K4"/>
<dbReference type="MEROPS" id="S26.010"/>
<dbReference type="EnsemblFungi" id="CBF83359">
    <property type="protein sequence ID" value="CBF83359"/>
    <property type="gene ID" value="ANIA_10354"/>
</dbReference>
<dbReference type="KEGG" id="ani:ANIA_10354"/>
<dbReference type="VEuPathDB" id="FungiDB:AN10354"/>
<dbReference type="eggNOG" id="KOG3342">
    <property type="taxonomic scope" value="Eukaryota"/>
</dbReference>
<dbReference type="HOGENOM" id="CLU_806600_0_0_1"/>
<dbReference type="InParanoid" id="Q5B8K4"/>
<dbReference type="OMA" id="ILMNEYP"/>
<dbReference type="OrthoDB" id="10257561at2759"/>
<dbReference type="Proteomes" id="UP000000560">
    <property type="component" value="Chromosome VI"/>
</dbReference>
<dbReference type="GO" id="GO:0005787">
    <property type="term" value="C:signal peptidase complex"/>
    <property type="evidence" value="ECO:0000318"/>
    <property type="project" value="GO_Central"/>
</dbReference>
<dbReference type="GO" id="GO:0008233">
    <property type="term" value="F:peptidase activity"/>
    <property type="evidence" value="ECO:0000318"/>
    <property type="project" value="GO_Central"/>
</dbReference>
<dbReference type="GO" id="GO:0004252">
    <property type="term" value="F:serine-type endopeptidase activity"/>
    <property type="evidence" value="ECO:0007669"/>
    <property type="project" value="UniProtKB-EC"/>
</dbReference>
<dbReference type="GO" id="GO:0045047">
    <property type="term" value="P:protein targeting to ER"/>
    <property type="evidence" value="ECO:0007669"/>
    <property type="project" value="EnsemblFungi"/>
</dbReference>
<dbReference type="GO" id="GO:0006465">
    <property type="term" value="P:signal peptide processing"/>
    <property type="evidence" value="ECO:0000318"/>
    <property type="project" value="GO_Central"/>
</dbReference>
<dbReference type="CDD" id="cd06530">
    <property type="entry name" value="S26_SPase_I"/>
    <property type="match status" value="1"/>
</dbReference>
<dbReference type="InterPro" id="IPR036286">
    <property type="entry name" value="LexA/Signal_pep-like_sf"/>
</dbReference>
<dbReference type="InterPro" id="IPR019756">
    <property type="entry name" value="Pept_S26A_signal_pept_1_Ser-AS"/>
</dbReference>
<dbReference type="InterPro" id="IPR019533">
    <property type="entry name" value="Peptidase_S26"/>
</dbReference>
<dbReference type="InterPro" id="IPR001733">
    <property type="entry name" value="Peptidase_S26B"/>
</dbReference>
<dbReference type="NCBIfam" id="TIGR02228">
    <property type="entry name" value="sigpep_I_arch"/>
    <property type="match status" value="1"/>
</dbReference>
<dbReference type="PANTHER" id="PTHR10806">
    <property type="entry name" value="SIGNAL PEPTIDASE COMPLEX CATALYTIC SUBUNIT SEC11"/>
    <property type="match status" value="1"/>
</dbReference>
<dbReference type="PANTHER" id="PTHR10806:SF6">
    <property type="entry name" value="SIGNAL PEPTIDASE COMPLEX CATALYTIC SUBUNIT SEC11"/>
    <property type="match status" value="1"/>
</dbReference>
<dbReference type="PRINTS" id="PR00728">
    <property type="entry name" value="SIGNALPTASE"/>
</dbReference>
<dbReference type="SUPFAM" id="SSF51306">
    <property type="entry name" value="LexA/Signal peptidase"/>
    <property type="match status" value="1"/>
</dbReference>
<dbReference type="PROSITE" id="PS00501">
    <property type="entry name" value="SPASE_I_1"/>
    <property type="match status" value="1"/>
</dbReference>
<protein>
    <recommendedName>
        <fullName>Signal peptidase complex catalytic subunit sec11</fullName>
        <ecNumber evidence="1">3.4.21.89</ecNumber>
    </recommendedName>
    <alternativeName>
        <fullName>Signal peptidase I</fullName>
    </alternativeName>
</protein>
<proteinExistence type="inferred from homology"/>
<accession>Q5B8K4</accession>
<accession>C8VIJ4</accession>
<gene>
    <name type="primary">sec11</name>
    <name type="ORF">AN3126</name>
</gene>
<comment type="function">
    <text evidence="1 2">Catalytic component of the signal peptidase complex (SPC) which catalyzes the cleavage of N-terminal signal sequences from nascent proteins as they are translocated into the lumen of the endoplasmic reticulum (By similarity). Specifically cleaves N-terminal signal peptides that contain a hydrophobic alpha-helix (h-region) shorter than 18-20 amino acids (By similarity).</text>
</comment>
<comment type="catalytic activity">
    <reaction evidence="1">
        <text>Cleavage of hydrophobic, N-terminal signal or leader sequences from secreted and periplasmic proteins.</text>
        <dbReference type="EC" id="3.4.21.89"/>
    </reaction>
</comment>
<comment type="subunit">
    <text evidence="1 2">Component of the signal peptidase complex (SPC) composed of a catalytic subunit SEC11 and three accessory subunits SPC1, SPC2 and SPC3 (By similarity). The complex induces a local thinning of the ER membrane which is used to measure the length of the signal peptide (SP) h-region of protein substrates. This ensures the selectivity of the complex towards h-regions shorter than 18-20 amino acids (By similarity). SPC associates with the translocon complex (By similarity).</text>
</comment>
<comment type="subcellular location">
    <subcellularLocation>
        <location evidence="1">Endoplasmic reticulum membrane</location>
        <topology evidence="1">Single-pass type II membrane protein</topology>
    </subcellularLocation>
</comment>
<comment type="domain">
    <text evidence="2">The C-terminal short (CTS) helix is essential for catalytic activity. It may be accommodated as a transmembrane helix in the thinned membrane environment of the complex, similarly to the signal peptide in the complex substrates.</text>
</comment>
<comment type="similarity">
    <text evidence="4">Belongs to the peptidase S26B family.</text>
</comment>
<comment type="sequence caution" evidence="4">
    <conflict type="erroneous gene model prediction">
        <sequence resource="EMBL-CDS" id="EAA63697"/>
    </conflict>
</comment>
<sequence length="192" mass="21363">MLSFLSSNLSNTRQSIAQVLNFALVLSTAFMLWKGLSVVTASSSPIVVVLSGSMEPAFQRGDLLFLWNRSPRAEVGEIVVYNVKGKDIPIVHRVVRTFPEVEGKKEKTVKEVTVSTPTPPNMLLTKGDNNLADDTELYARGQEFLHRKEDIVGSVRGYMPMVGYVTIMLSEHPWLKSVLLGIMGLMVILQRE</sequence>
<reference key="1">
    <citation type="journal article" date="2005" name="Nature">
        <title>Sequencing of Aspergillus nidulans and comparative analysis with A. fumigatus and A. oryzae.</title>
        <authorList>
            <person name="Galagan J.E."/>
            <person name="Calvo S.E."/>
            <person name="Cuomo C."/>
            <person name="Ma L.-J."/>
            <person name="Wortman J.R."/>
            <person name="Batzoglou S."/>
            <person name="Lee S.-I."/>
            <person name="Bastuerkmen M."/>
            <person name="Spevak C.C."/>
            <person name="Clutterbuck J."/>
            <person name="Kapitonov V."/>
            <person name="Jurka J."/>
            <person name="Scazzocchio C."/>
            <person name="Farman M.L."/>
            <person name="Butler J."/>
            <person name="Purcell S."/>
            <person name="Harris S."/>
            <person name="Braus G.H."/>
            <person name="Draht O."/>
            <person name="Busch S."/>
            <person name="D'Enfert C."/>
            <person name="Bouchier C."/>
            <person name="Goldman G.H."/>
            <person name="Bell-Pedersen D."/>
            <person name="Griffiths-Jones S."/>
            <person name="Doonan J.H."/>
            <person name="Yu J."/>
            <person name="Vienken K."/>
            <person name="Pain A."/>
            <person name="Freitag M."/>
            <person name="Selker E.U."/>
            <person name="Archer D.B."/>
            <person name="Penalva M.A."/>
            <person name="Oakley B.R."/>
            <person name="Momany M."/>
            <person name="Tanaka T."/>
            <person name="Kumagai T."/>
            <person name="Asai K."/>
            <person name="Machida M."/>
            <person name="Nierman W.C."/>
            <person name="Denning D.W."/>
            <person name="Caddick M.X."/>
            <person name="Hynes M."/>
            <person name="Paoletti M."/>
            <person name="Fischer R."/>
            <person name="Miller B.L."/>
            <person name="Dyer P.S."/>
            <person name="Sachs M.S."/>
            <person name="Osmani S.A."/>
            <person name="Birren B.W."/>
        </authorList>
    </citation>
    <scope>NUCLEOTIDE SEQUENCE [LARGE SCALE GENOMIC DNA]</scope>
    <source>
        <strain>FGSC A4 / ATCC 38163 / CBS 112.46 / NRRL 194 / M139</strain>
    </source>
</reference>
<reference key="2">
    <citation type="journal article" date="2009" name="Fungal Genet. Biol.">
        <title>The 2008 update of the Aspergillus nidulans genome annotation: a community effort.</title>
        <authorList>
            <person name="Wortman J.R."/>
            <person name="Gilsenan J.M."/>
            <person name="Joardar V."/>
            <person name="Deegan J."/>
            <person name="Clutterbuck J."/>
            <person name="Andersen M.R."/>
            <person name="Archer D."/>
            <person name="Bencina M."/>
            <person name="Braus G."/>
            <person name="Coutinho P."/>
            <person name="von Dohren H."/>
            <person name="Doonan J."/>
            <person name="Driessen A.J."/>
            <person name="Durek P."/>
            <person name="Espeso E."/>
            <person name="Fekete E."/>
            <person name="Flipphi M."/>
            <person name="Estrada C.G."/>
            <person name="Geysens S."/>
            <person name="Goldman G."/>
            <person name="de Groot P.W."/>
            <person name="Hansen K."/>
            <person name="Harris S.D."/>
            <person name="Heinekamp T."/>
            <person name="Helmstaedt K."/>
            <person name="Henrissat B."/>
            <person name="Hofmann G."/>
            <person name="Homan T."/>
            <person name="Horio T."/>
            <person name="Horiuchi H."/>
            <person name="James S."/>
            <person name="Jones M."/>
            <person name="Karaffa L."/>
            <person name="Karanyi Z."/>
            <person name="Kato M."/>
            <person name="Keller N."/>
            <person name="Kelly D.E."/>
            <person name="Kiel J.A."/>
            <person name="Kim J.M."/>
            <person name="van der Klei I.J."/>
            <person name="Klis F.M."/>
            <person name="Kovalchuk A."/>
            <person name="Krasevec N."/>
            <person name="Kubicek C.P."/>
            <person name="Liu B."/>
            <person name="Maccabe A."/>
            <person name="Meyer V."/>
            <person name="Mirabito P."/>
            <person name="Miskei M."/>
            <person name="Mos M."/>
            <person name="Mullins J."/>
            <person name="Nelson D.R."/>
            <person name="Nielsen J."/>
            <person name="Oakley B.R."/>
            <person name="Osmani S.A."/>
            <person name="Pakula T."/>
            <person name="Paszewski A."/>
            <person name="Paulsen I."/>
            <person name="Pilsyk S."/>
            <person name="Pocsi I."/>
            <person name="Punt P.J."/>
            <person name="Ram A.F."/>
            <person name="Ren Q."/>
            <person name="Robellet X."/>
            <person name="Robson G."/>
            <person name="Seiboth B."/>
            <person name="van Solingen P."/>
            <person name="Specht T."/>
            <person name="Sun J."/>
            <person name="Taheri-Talesh N."/>
            <person name="Takeshita N."/>
            <person name="Ussery D."/>
            <person name="vanKuyk P.A."/>
            <person name="Visser H."/>
            <person name="van de Vondervoort P.J."/>
            <person name="de Vries R.P."/>
            <person name="Walton J."/>
            <person name="Xiang X."/>
            <person name="Xiong Y."/>
            <person name="Zeng A.P."/>
            <person name="Brandt B.W."/>
            <person name="Cornell M.J."/>
            <person name="van den Hondel C.A."/>
            <person name="Visser J."/>
            <person name="Oliver S.G."/>
            <person name="Turner G."/>
        </authorList>
    </citation>
    <scope>GENOME REANNOTATION</scope>
    <source>
        <strain>FGSC A4 / ATCC 38163 / CBS 112.46 / NRRL 194 / M139</strain>
    </source>
</reference>
<name>SEC11_EMENI</name>